<protein>
    <recommendedName>
        <fullName evidence="1">Small ribosomal subunit protein uS7</fullName>
    </recommendedName>
    <alternativeName>
        <fullName evidence="2">30S ribosomal protein S7</fullName>
    </alternativeName>
</protein>
<feature type="chain" id="PRO_0000124262" description="Small ribosomal subunit protein uS7">
    <location>
        <begin position="1"/>
        <end position="157"/>
    </location>
</feature>
<gene>
    <name evidence="1" type="primary">rpsG</name>
</gene>
<organism>
    <name type="scientific">Eikenella corrodens</name>
    <dbReference type="NCBI Taxonomy" id="539"/>
    <lineage>
        <taxon>Bacteria</taxon>
        <taxon>Pseudomonadati</taxon>
        <taxon>Pseudomonadota</taxon>
        <taxon>Betaproteobacteria</taxon>
        <taxon>Neisseriales</taxon>
        <taxon>Neisseriaceae</taxon>
        <taxon>Eikenella</taxon>
    </lineage>
</organism>
<dbReference type="EMBL" id="Z12610">
    <property type="protein sequence ID" value="CAA78256.1"/>
    <property type="molecule type" value="Genomic_DNA"/>
</dbReference>
<dbReference type="PIR" id="S23850">
    <property type="entry name" value="S23850"/>
</dbReference>
<dbReference type="SMR" id="P35642"/>
<dbReference type="STRING" id="539.A7P85_03850"/>
<dbReference type="GO" id="GO:0015935">
    <property type="term" value="C:small ribosomal subunit"/>
    <property type="evidence" value="ECO:0007669"/>
    <property type="project" value="InterPro"/>
</dbReference>
<dbReference type="GO" id="GO:0019843">
    <property type="term" value="F:rRNA binding"/>
    <property type="evidence" value="ECO:0007669"/>
    <property type="project" value="UniProtKB-UniRule"/>
</dbReference>
<dbReference type="GO" id="GO:0003735">
    <property type="term" value="F:structural constituent of ribosome"/>
    <property type="evidence" value="ECO:0007669"/>
    <property type="project" value="InterPro"/>
</dbReference>
<dbReference type="GO" id="GO:0000049">
    <property type="term" value="F:tRNA binding"/>
    <property type="evidence" value="ECO:0007669"/>
    <property type="project" value="UniProtKB-UniRule"/>
</dbReference>
<dbReference type="GO" id="GO:0006412">
    <property type="term" value="P:translation"/>
    <property type="evidence" value="ECO:0007669"/>
    <property type="project" value="UniProtKB-UniRule"/>
</dbReference>
<dbReference type="CDD" id="cd14869">
    <property type="entry name" value="uS7_Bacteria"/>
    <property type="match status" value="1"/>
</dbReference>
<dbReference type="FunFam" id="1.10.455.10:FF:000001">
    <property type="entry name" value="30S ribosomal protein S7"/>
    <property type="match status" value="1"/>
</dbReference>
<dbReference type="Gene3D" id="1.10.455.10">
    <property type="entry name" value="Ribosomal protein S7 domain"/>
    <property type="match status" value="1"/>
</dbReference>
<dbReference type="HAMAP" id="MF_00480_B">
    <property type="entry name" value="Ribosomal_uS7_B"/>
    <property type="match status" value="1"/>
</dbReference>
<dbReference type="InterPro" id="IPR000235">
    <property type="entry name" value="Ribosomal_uS7"/>
</dbReference>
<dbReference type="InterPro" id="IPR005717">
    <property type="entry name" value="Ribosomal_uS7_bac/org-type"/>
</dbReference>
<dbReference type="InterPro" id="IPR020606">
    <property type="entry name" value="Ribosomal_uS7_CS"/>
</dbReference>
<dbReference type="InterPro" id="IPR023798">
    <property type="entry name" value="Ribosomal_uS7_dom"/>
</dbReference>
<dbReference type="InterPro" id="IPR036823">
    <property type="entry name" value="Ribosomal_uS7_dom_sf"/>
</dbReference>
<dbReference type="NCBIfam" id="TIGR01029">
    <property type="entry name" value="rpsG_bact"/>
    <property type="match status" value="1"/>
</dbReference>
<dbReference type="PANTHER" id="PTHR11205">
    <property type="entry name" value="RIBOSOMAL PROTEIN S7"/>
    <property type="match status" value="1"/>
</dbReference>
<dbReference type="Pfam" id="PF00177">
    <property type="entry name" value="Ribosomal_S7"/>
    <property type="match status" value="1"/>
</dbReference>
<dbReference type="PIRSF" id="PIRSF002122">
    <property type="entry name" value="RPS7p_RPS7a_RPS5e_RPS7o"/>
    <property type="match status" value="1"/>
</dbReference>
<dbReference type="SUPFAM" id="SSF47973">
    <property type="entry name" value="Ribosomal protein S7"/>
    <property type="match status" value="1"/>
</dbReference>
<dbReference type="PROSITE" id="PS00052">
    <property type="entry name" value="RIBOSOMAL_S7"/>
    <property type="match status" value="1"/>
</dbReference>
<name>RS7_EIKCO</name>
<evidence type="ECO:0000255" key="1">
    <source>
        <dbReference type="HAMAP-Rule" id="MF_00480"/>
    </source>
</evidence>
<evidence type="ECO:0000305" key="2"/>
<sequence>MPRRREVPKRDVLPDPKFGSVELTKFMNALMVDGKKSVDERIVYGALEQTAKKVQGKEAIEVFNEAIDNAKPIVEVKSRRVGGANYQVPVEVRPSRRLALAMRWVRDAARKRGEKSMDLRLADELIDAAEGRGGAMKKREEVHRMAEANKAFSHFRF</sequence>
<accession>P35642</accession>
<proteinExistence type="inferred from homology"/>
<reference key="1">
    <citation type="submission" date="1992-06" db="EMBL/GenBank/DDBJ databases">
        <authorList>
            <person name="Rao V.K."/>
            <person name="Whitlock J.A."/>
            <person name="Progulske-Fox A."/>
        </authorList>
    </citation>
    <scope>NUCLEOTIDE SEQUENCE [GENOMIC DNA]</scope>
    <source>
        <strain>ATCC 23834 / DSM 8340 / JCM 12952 / KCTC 15198 / LMG 15557 / NCTC 10596 / 333/54-55</strain>
    </source>
</reference>
<comment type="function">
    <text evidence="1">One of the primary rRNA binding proteins, it binds directly to 16S rRNA where it nucleates assembly of the head domain of the 30S subunit. Is located at the subunit interface close to the decoding center, probably blocks exit of the E-site tRNA.</text>
</comment>
<comment type="subunit">
    <text evidence="1">Part of the 30S ribosomal subunit. Contacts proteins S9 and S11.</text>
</comment>
<comment type="similarity">
    <text evidence="1">Belongs to the universal ribosomal protein uS7 family.</text>
</comment>
<keyword id="KW-0687">Ribonucleoprotein</keyword>
<keyword id="KW-0689">Ribosomal protein</keyword>
<keyword id="KW-0694">RNA-binding</keyword>
<keyword id="KW-0699">rRNA-binding</keyword>
<keyword id="KW-0820">tRNA-binding</keyword>